<feature type="chain" id="PRO_0000160693" description="Alcohol dehydrogenase 1">
    <location>
        <begin position="1"/>
        <end position="349"/>
    </location>
</feature>
<feature type="binding site" evidence="1">
    <location>
        <position position="46"/>
    </location>
    <ligand>
        <name>Zn(2+)</name>
        <dbReference type="ChEBI" id="CHEBI:29105"/>
        <label>1</label>
        <note>catalytic</note>
    </ligand>
</feature>
<feature type="binding site" evidence="1">
    <location>
        <position position="69"/>
    </location>
    <ligand>
        <name>Zn(2+)</name>
        <dbReference type="ChEBI" id="CHEBI:29105"/>
        <label>1</label>
        <note>catalytic</note>
    </ligand>
</feature>
<feature type="binding site" evidence="1">
    <location>
        <position position="100"/>
    </location>
    <ligand>
        <name>Zn(2+)</name>
        <dbReference type="ChEBI" id="CHEBI:29105"/>
        <label>2</label>
    </ligand>
</feature>
<feature type="binding site" evidence="1">
    <location>
        <position position="103"/>
    </location>
    <ligand>
        <name>Zn(2+)</name>
        <dbReference type="ChEBI" id="CHEBI:29105"/>
        <label>2</label>
    </ligand>
</feature>
<feature type="binding site" evidence="1">
    <location>
        <position position="106"/>
    </location>
    <ligand>
        <name>Zn(2+)</name>
        <dbReference type="ChEBI" id="CHEBI:29105"/>
        <label>2</label>
    </ligand>
</feature>
<feature type="binding site" evidence="1">
    <location>
        <position position="114"/>
    </location>
    <ligand>
        <name>Zn(2+)</name>
        <dbReference type="ChEBI" id="CHEBI:29105"/>
        <label>2</label>
    </ligand>
</feature>
<feature type="binding site" evidence="1">
    <location>
        <position position="156"/>
    </location>
    <ligand>
        <name>Zn(2+)</name>
        <dbReference type="ChEBI" id="CHEBI:29105"/>
        <label>1</label>
        <note>catalytic</note>
    </ligand>
</feature>
<feature type="binding site" evidence="1">
    <location>
        <begin position="180"/>
        <end position="186"/>
    </location>
    <ligand>
        <name>NAD(+)</name>
        <dbReference type="ChEBI" id="CHEBI:57540"/>
    </ligand>
</feature>
<feature type="binding site" evidence="1">
    <location>
        <position position="204"/>
    </location>
    <ligand>
        <name>NAD(+)</name>
        <dbReference type="ChEBI" id="CHEBI:57540"/>
    </ligand>
</feature>
<feature type="binding site" evidence="1">
    <location>
        <position position="208"/>
    </location>
    <ligand>
        <name>NAD(+)</name>
        <dbReference type="ChEBI" id="CHEBI:57540"/>
    </ligand>
</feature>
<feature type="binding site" evidence="1">
    <location>
        <begin position="270"/>
        <end position="272"/>
    </location>
    <ligand>
        <name>NAD(+)</name>
        <dbReference type="ChEBI" id="CHEBI:57540"/>
    </ligand>
</feature>
<feature type="binding site" evidence="1">
    <location>
        <position position="342"/>
    </location>
    <ligand>
        <name>NAD(+)</name>
        <dbReference type="ChEBI" id="CHEBI:57540"/>
    </ligand>
</feature>
<feature type="sequence conflict" description="In Ref. 2; AAB03373." evidence="2" ref="2">
    <original>EP</original>
    <variation>DA</variation>
    <location>
        <begin position="111"/>
        <end position="112"/>
    </location>
</feature>
<feature type="sequence conflict" description="In Ref. 2; AAB03373." evidence="2" ref="2">
    <original>S</original>
    <variation>R</variation>
    <location>
        <position position="207"/>
    </location>
</feature>
<feature type="sequence conflict" description="In Ref. 2; AAB03373." evidence="2" ref="2">
    <original>A</original>
    <variation>G</variation>
    <location>
        <position position="248"/>
    </location>
</feature>
<feature type="sequence conflict" description="In Ref. 2; AAB03373." evidence="2" ref="2">
    <original>M</original>
    <variation>I</variation>
    <location>
        <position position="307"/>
    </location>
</feature>
<feature type="sequence conflict" description="In Ref. 2; AAB03373." evidence="2" ref="2">
    <original>V</original>
    <variation>G</variation>
    <location>
        <position position="344"/>
    </location>
</feature>
<dbReference type="EC" id="1.1.1.1"/>
<dbReference type="EMBL" id="Z81570">
    <property type="protein sequence ID" value="CAB04604.1"/>
    <property type="molecule type" value="Genomic_DNA"/>
</dbReference>
<dbReference type="EMBL" id="U18780">
    <property type="protein sequence ID" value="AAB03373.1"/>
    <property type="molecule type" value="mRNA"/>
</dbReference>
<dbReference type="PIR" id="T23626">
    <property type="entry name" value="T23626"/>
</dbReference>
<dbReference type="SMR" id="Q17334"/>
<dbReference type="BioGRID" id="44651">
    <property type="interactions" value="30"/>
</dbReference>
<dbReference type="DIP" id="DIP-26303N"/>
<dbReference type="FunCoup" id="Q17334">
    <property type="interactions" value="365"/>
</dbReference>
<dbReference type="IntAct" id="Q17334">
    <property type="interactions" value="3"/>
</dbReference>
<dbReference type="MINT" id="Q17334"/>
<dbReference type="STRING" id="6239.K12G11.3.1"/>
<dbReference type="iPTMnet" id="Q17334"/>
<dbReference type="PaxDb" id="6239-K12G11.3"/>
<dbReference type="PeptideAtlas" id="Q17334"/>
<dbReference type="EnsemblMetazoa" id="K12G11.3.1">
    <property type="protein sequence ID" value="K12G11.3.1"/>
    <property type="gene ID" value="WBGene00010790"/>
</dbReference>
<dbReference type="KEGG" id="cel:CELE_K12G11.3"/>
<dbReference type="UCSC" id="K12G11.3">
    <property type="organism name" value="c. elegans"/>
</dbReference>
<dbReference type="AGR" id="WB:WBGene00010790"/>
<dbReference type="CTD" id="179627"/>
<dbReference type="WormBase" id="K12G11.3">
    <property type="protein sequence ID" value="CE12212"/>
    <property type="gene ID" value="WBGene00010790"/>
    <property type="gene designation" value="adh-1"/>
</dbReference>
<dbReference type="eggNOG" id="KOG0023">
    <property type="taxonomic scope" value="Eukaryota"/>
</dbReference>
<dbReference type="GeneTree" id="ENSGT00940000171159"/>
<dbReference type="HOGENOM" id="CLU_026673_20_1_1"/>
<dbReference type="InParanoid" id="Q17334"/>
<dbReference type="OMA" id="YKGLKMT"/>
<dbReference type="OrthoDB" id="1879366at2759"/>
<dbReference type="PhylomeDB" id="Q17334"/>
<dbReference type="PRO" id="PR:Q17334"/>
<dbReference type="Proteomes" id="UP000001940">
    <property type="component" value="Chromosome V"/>
</dbReference>
<dbReference type="Bgee" id="WBGene00010790">
    <property type="expression patterns" value="Expressed in larva and 4 other cell types or tissues"/>
</dbReference>
<dbReference type="GO" id="GO:0005737">
    <property type="term" value="C:cytoplasm"/>
    <property type="evidence" value="ECO:0000318"/>
    <property type="project" value="GO_Central"/>
</dbReference>
<dbReference type="GO" id="GO:0004022">
    <property type="term" value="F:alcohol dehydrogenase (NAD+) activity"/>
    <property type="evidence" value="ECO:0000318"/>
    <property type="project" value="GO_Central"/>
</dbReference>
<dbReference type="GO" id="GO:0008270">
    <property type="term" value="F:zinc ion binding"/>
    <property type="evidence" value="ECO:0007669"/>
    <property type="project" value="InterPro"/>
</dbReference>
<dbReference type="GO" id="GO:0050830">
    <property type="term" value="P:defense response to Gram-positive bacterium"/>
    <property type="evidence" value="ECO:0000315"/>
    <property type="project" value="UniProtKB"/>
</dbReference>
<dbReference type="CDD" id="cd08297">
    <property type="entry name" value="CAD3"/>
    <property type="match status" value="1"/>
</dbReference>
<dbReference type="FunFam" id="3.40.50.720:FF:000039">
    <property type="entry name" value="Alcohol dehydrogenase AdhP"/>
    <property type="match status" value="1"/>
</dbReference>
<dbReference type="Gene3D" id="3.90.180.10">
    <property type="entry name" value="Medium-chain alcohol dehydrogenases, catalytic domain"/>
    <property type="match status" value="1"/>
</dbReference>
<dbReference type="Gene3D" id="3.40.50.720">
    <property type="entry name" value="NAD(P)-binding Rossmann-like Domain"/>
    <property type="match status" value="1"/>
</dbReference>
<dbReference type="InterPro" id="IPR013149">
    <property type="entry name" value="ADH-like_C"/>
</dbReference>
<dbReference type="InterPro" id="IPR013154">
    <property type="entry name" value="ADH-like_N"/>
</dbReference>
<dbReference type="InterPro" id="IPR002328">
    <property type="entry name" value="ADH_Zn_CS"/>
</dbReference>
<dbReference type="InterPro" id="IPR011032">
    <property type="entry name" value="GroES-like_sf"/>
</dbReference>
<dbReference type="InterPro" id="IPR036291">
    <property type="entry name" value="NAD(P)-bd_dom_sf"/>
</dbReference>
<dbReference type="InterPro" id="IPR020843">
    <property type="entry name" value="PKS_ER"/>
</dbReference>
<dbReference type="PANTHER" id="PTHR42940">
    <property type="entry name" value="ALCOHOL DEHYDROGENASE 1-RELATED"/>
    <property type="match status" value="1"/>
</dbReference>
<dbReference type="PANTHER" id="PTHR42940:SF3">
    <property type="entry name" value="ALCOHOL DEHYDROGENASE 1-RELATED"/>
    <property type="match status" value="1"/>
</dbReference>
<dbReference type="Pfam" id="PF08240">
    <property type="entry name" value="ADH_N"/>
    <property type="match status" value="1"/>
</dbReference>
<dbReference type="Pfam" id="PF00107">
    <property type="entry name" value="ADH_zinc_N"/>
    <property type="match status" value="1"/>
</dbReference>
<dbReference type="SMART" id="SM00829">
    <property type="entry name" value="PKS_ER"/>
    <property type="match status" value="1"/>
</dbReference>
<dbReference type="SUPFAM" id="SSF50129">
    <property type="entry name" value="GroES-like"/>
    <property type="match status" value="1"/>
</dbReference>
<dbReference type="SUPFAM" id="SSF51735">
    <property type="entry name" value="NAD(P)-binding Rossmann-fold domains"/>
    <property type="match status" value="1"/>
</dbReference>
<dbReference type="PROSITE" id="PS00059">
    <property type="entry name" value="ADH_ZINC"/>
    <property type="match status" value="1"/>
</dbReference>
<accession>Q17334</accession>
<accession>O45688</accession>
<evidence type="ECO:0000250" key="1"/>
<evidence type="ECO:0000305" key="2"/>
<evidence type="ECO:0000312" key="3">
    <source>
        <dbReference type="WormBase" id="K12G11.3"/>
    </source>
</evidence>
<gene>
    <name evidence="3" type="primary">adh-1</name>
    <name type="ORF">K12G11.3</name>
</gene>
<sequence length="349" mass="37697">MTVELPSTQRALVFDTWNGPLEVRQVPVPSPADDEILVKIEYSGICHSDLHVWLGDLKDMSVCPLVGGHEGAGSVVQIGKNVTGWQLGDKAGVKLMNFNCLNCEFCKKGHEPLCHHIQNYGFDRSGTFQEYLTIRGVDAAKINKDTNLAAAAPILCAGVTVYKALKESNVAPGQIIVLTGAGGGLGSLAIQYACAMGMRVVAMDHGSKEAHCKGLGAEWFVDAFETPDIVSHITKLTEGGPHGVINFAVARKPMEQAVEYVRKRGTVVFVGLPKDSKVTFDTTPFIFNAITIKGSIVGSRLDVDEAMEFVTRGIVKVPLELVKLEDVPAVYQRMLDGKINSRAVVDFSL</sequence>
<organism>
    <name type="scientific">Caenorhabditis elegans</name>
    <dbReference type="NCBI Taxonomy" id="6239"/>
    <lineage>
        <taxon>Eukaryota</taxon>
        <taxon>Metazoa</taxon>
        <taxon>Ecdysozoa</taxon>
        <taxon>Nematoda</taxon>
        <taxon>Chromadorea</taxon>
        <taxon>Rhabditida</taxon>
        <taxon>Rhabditina</taxon>
        <taxon>Rhabditomorpha</taxon>
        <taxon>Rhabditoidea</taxon>
        <taxon>Rhabditidae</taxon>
        <taxon>Peloderinae</taxon>
        <taxon>Caenorhabditis</taxon>
    </lineage>
</organism>
<comment type="catalytic activity">
    <reaction>
        <text>a primary alcohol + NAD(+) = an aldehyde + NADH + H(+)</text>
        <dbReference type="Rhea" id="RHEA:10736"/>
        <dbReference type="ChEBI" id="CHEBI:15378"/>
        <dbReference type="ChEBI" id="CHEBI:15734"/>
        <dbReference type="ChEBI" id="CHEBI:17478"/>
        <dbReference type="ChEBI" id="CHEBI:57540"/>
        <dbReference type="ChEBI" id="CHEBI:57945"/>
        <dbReference type="EC" id="1.1.1.1"/>
    </reaction>
</comment>
<comment type="catalytic activity">
    <reaction>
        <text>a secondary alcohol + NAD(+) = a ketone + NADH + H(+)</text>
        <dbReference type="Rhea" id="RHEA:10740"/>
        <dbReference type="ChEBI" id="CHEBI:15378"/>
        <dbReference type="ChEBI" id="CHEBI:17087"/>
        <dbReference type="ChEBI" id="CHEBI:35681"/>
        <dbReference type="ChEBI" id="CHEBI:57540"/>
        <dbReference type="ChEBI" id="CHEBI:57945"/>
        <dbReference type="EC" id="1.1.1.1"/>
    </reaction>
</comment>
<comment type="cofactor">
    <cofactor evidence="1">
        <name>Zn(2+)</name>
        <dbReference type="ChEBI" id="CHEBI:29105"/>
    </cofactor>
    <text evidence="1">Binds 2 Zn(2+) ions per subunit.</text>
</comment>
<comment type="subunit">
    <text evidence="2">Homotetramer.</text>
</comment>
<comment type="similarity">
    <text evidence="2">Belongs to the zinc-containing alcohol dehydrogenase family.</text>
</comment>
<protein>
    <recommendedName>
        <fullName>Alcohol dehydrogenase 1</fullName>
        <ecNumber>1.1.1.1</ecNumber>
    </recommendedName>
    <alternativeName>
        <fullName>Sorbitol dehydrogenase family protein 1</fullName>
    </alternativeName>
</protein>
<reference key="1">
    <citation type="journal article" date="1998" name="Science">
        <title>Genome sequence of the nematode C. elegans: a platform for investigating biology.</title>
        <authorList>
            <consortium name="The C. elegans sequencing consortium"/>
        </authorList>
    </citation>
    <scope>NUCLEOTIDE SEQUENCE [LARGE SCALE GENOMIC DNA]</scope>
    <source>
        <strain>Bristol N2</strain>
    </source>
</reference>
<reference key="2">
    <citation type="journal article" date="1995" name="J. Mol. Evol.">
        <title>Caenorhabditis elegans contains genes encoding two new members of the Zn-containing alcohol dehydrogenase family.</title>
        <authorList>
            <person name="Glasner J.D."/>
            <person name="Kocher T.D."/>
            <person name="Collins J.J."/>
        </authorList>
    </citation>
    <scope>NUCLEOTIDE SEQUENCE [MRNA] OF 111-349</scope>
</reference>
<proteinExistence type="evidence at transcript level"/>
<keyword id="KW-0479">Metal-binding</keyword>
<keyword id="KW-0520">NAD</keyword>
<keyword id="KW-0560">Oxidoreductase</keyword>
<keyword id="KW-1185">Reference proteome</keyword>
<keyword id="KW-0862">Zinc</keyword>
<name>ADH1_CAEEL</name>